<gene>
    <name evidence="1" type="primary">sprT</name>
    <name type="ordered locus">KPK_0732</name>
</gene>
<comment type="cofactor">
    <cofactor evidence="1">
        <name>Zn(2+)</name>
        <dbReference type="ChEBI" id="CHEBI:29105"/>
    </cofactor>
    <text evidence="1">Binds 1 zinc ion.</text>
</comment>
<comment type="subcellular location">
    <subcellularLocation>
        <location evidence="1">Cytoplasm</location>
    </subcellularLocation>
</comment>
<comment type="similarity">
    <text evidence="1">Belongs to the SprT family.</text>
</comment>
<name>SPRT_KLEP3</name>
<organism>
    <name type="scientific">Klebsiella pneumoniae (strain 342)</name>
    <dbReference type="NCBI Taxonomy" id="507522"/>
    <lineage>
        <taxon>Bacteria</taxon>
        <taxon>Pseudomonadati</taxon>
        <taxon>Pseudomonadota</taxon>
        <taxon>Gammaproteobacteria</taxon>
        <taxon>Enterobacterales</taxon>
        <taxon>Enterobacteriaceae</taxon>
        <taxon>Klebsiella/Raoultella group</taxon>
        <taxon>Klebsiella</taxon>
        <taxon>Klebsiella pneumoniae complex</taxon>
    </lineage>
</organism>
<evidence type="ECO:0000255" key="1">
    <source>
        <dbReference type="HAMAP-Rule" id="MF_00746"/>
    </source>
</evidence>
<feature type="chain" id="PRO_1000133244" description="Protein SprT">
    <location>
        <begin position="1"/>
        <end position="166"/>
    </location>
</feature>
<feature type="domain" description="SprT-like" evidence="1">
    <location>
        <begin position="19"/>
        <end position="164"/>
    </location>
</feature>
<feature type="active site" evidence="1">
    <location>
        <position position="79"/>
    </location>
</feature>
<feature type="binding site" evidence="1">
    <location>
        <position position="78"/>
    </location>
    <ligand>
        <name>Zn(2+)</name>
        <dbReference type="ChEBI" id="CHEBI:29105"/>
    </ligand>
</feature>
<feature type="binding site" evidence="1">
    <location>
        <position position="82"/>
    </location>
    <ligand>
        <name>Zn(2+)</name>
        <dbReference type="ChEBI" id="CHEBI:29105"/>
    </ligand>
</feature>
<sequence length="166" mass="19591">MKTPRIPIAIQQAVMRSLREHLAKANLKLERRYAEPTLVYQQRGTSAGTAWLEKNEIRLNPVLLLENQQEFIDEVVPHELAHLLVWQHFGRVAPHGKEWKWMMENVLGVPARRTHRFELDSVRQNTFPYRCRCQQHQLTVRRHNRVVRGEATYRCVHCGDLLVAEK</sequence>
<accession>B5XUA6</accession>
<proteinExistence type="inferred from homology"/>
<dbReference type="EMBL" id="CP000964">
    <property type="protein sequence ID" value="ACI09535.1"/>
    <property type="molecule type" value="Genomic_DNA"/>
</dbReference>
<dbReference type="KEGG" id="kpe:KPK_0732"/>
<dbReference type="HOGENOM" id="CLU_113336_0_1_6"/>
<dbReference type="Proteomes" id="UP000001734">
    <property type="component" value="Chromosome"/>
</dbReference>
<dbReference type="GO" id="GO:0005737">
    <property type="term" value="C:cytoplasm"/>
    <property type="evidence" value="ECO:0007669"/>
    <property type="project" value="UniProtKB-SubCell"/>
</dbReference>
<dbReference type="GO" id="GO:0008270">
    <property type="term" value="F:zinc ion binding"/>
    <property type="evidence" value="ECO:0007669"/>
    <property type="project" value="UniProtKB-UniRule"/>
</dbReference>
<dbReference type="GO" id="GO:0006950">
    <property type="term" value="P:response to stress"/>
    <property type="evidence" value="ECO:0007669"/>
    <property type="project" value="UniProtKB-ARBA"/>
</dbReference>
<dbReference type="Gene3D" id="3.30.2010.10">
    <property type="entry name" value="Metalloproteases ('zincins'), catalytic domain"/>
    <property type="match status" value="1"/>
</dbReference>
<dbReference type="HAMAP" id="MF_00746">
    <property type="entry name" value="SprT"/>
    <property type="match status" value="1"/>
</dbReference>
<dbReference type="InterPro" id="IPR006640">
    <property type="entry name" value="SprT-like_domain"/>
</dbReference>
<dbReference type="InterPro" id="IPR035240">
    <property type="entry name" value="SprT_Zn_ribbon"/>
</dbReference>
<dbReference type="InterPro" id="IPR023483">
    <property type="entry name" value="Uncharacterised_SprT"/>
</dbReference>
<dbReference type="NCBIfam" id="NF003421">
    <property type="entry name" value="PRK04860.1"/>
    <property type="match status" value="1"/>
</dbReference>
<dbReference type="PANTHER" id="PTHR38773">
    <property type="entry name" value="PROTEIN SPRT"/>
    <property type="match status" value="1"/>
</dbReference>
<dbReference type="PANTHER" id="PTHR38773:SF1">
    <property type="entry name" value="PROTEIN SPRT"/>
    <property type="match status" value="1"/>
</dbReference>
<dbReference type="Pfam" id="PF10263">
    <property type="entry name" value="SprT-like"/>
    <property type="match status" value="1"/>
</dbReference>
<dbReference type="Pfam" id="PF17283">
    <property type="entry name" value="Zn_ribbon_SprT"/>
    <property type="match status" value="1"/>
</dbReference>
<dbReference type="SMART" id="SM00731">
    <property type="entry name" value="SprT"/>
    <property type="match status" value="1"/>
</dbReference>
<dbReference type="PROSITE" id="PS00142">
    <property type="entry name" value="ZINC_PROTEASE"/>
    <property type="match status" value="1"/>
</dbReference>
<reference key="1">
    <citation type="journal article" date="2008" name="PLoS Genet.">
        <title>Complete genome sequence of the N2-fixing broad host range endophyte Klebsiella pneumoniae 342 and virulence predictions verified in mice.</title>
        <authorList>
            <person name="Fouts D.E."/>
            <person name="Tyler H.L."/>
            <person name="DeBoy R.T."/>
            <person name="Daugherty S."/>
            <person name="Ren Q."/>
            <person name="Badger J.H."/>
            <person name="Durkin A.S."/>
            <person name="Huot H."/>
            <person name="Shrivastava S."/>
            <person name="Kothari S."/>
            <person name="Dodson R.J."/>
            <person name="Mohamoud Y."/>
            <person name="Khouri H."/>
            <person name="Roesch L.F.W."/>
            <person name="Krogfelt K.A."/>
            <person name="Struve C."/>
            <person name="Triplett E.W."/>
            <person name="Methe B.A."/>
        </authorList>
    </citation>
    <scope>NUCLEOTIDE SEQUENCE [LARGE SCALE GENOMIC DNA]</scope>
    <source>
        <strain>342</strain>
    </source>
</reference>
<keyword id="KW-0963">Cytoplasm</keyword>
<keyword id="KW-0479">Metal-binding</keyword>
<keyword id="KW-0862">Zinc</keyword>
<protein>
    <recommendedName>
        <fullName evidence="1">Protein SprT</fullName>
    </recommendedName>
</protein>